<evidence type="ECO:0000255" key="1">
    <source>
        <dbReference type="HAMAP-Rule" id="MF_00377"/>
    </source>
</evidence>
<gene>
    <name evidence="1" type="primary">dnaA</name>
    <name type="ordered locus">Suden_0001</name>
</gene>
<accession>Q30UP9</accession>
<organism>
    <name type="scientific">Sulfurimonas denitrificans (strain ATCC 33889 / DSM 1251)</name>
    <name type="common">Thiomicrospira denitrificans (strain ATCC 33889 / DSM 1251)</name>
    <dbReference type="NCBI Taxonomy" id="326298"/>
    <lineage>
        <taxon>Bacteria</taxon>
        <taxon>Pseudomonadati</taxon>
        <taxon>Campylobacterota</taxon>
        <taxon>Epsilonproteobacteria</taxon>
        <taxon>Campylobacterales</taxon>
        <taxon>Sulfurimonadaceae</taxon>
        <taxon>Sulfurimonas</taxon>
    </lineage>
</organism>
<reference key="1">
    <citation type="journal article" date="2008" name="Appl. Environ. Microbiol.">
        <title>Genome of the epsilonproteobacterial chemolithoautotroph Sulfurimonas denitrificans.</title>
        <authorList>
            <person name="Sievert S.M."/>
            <person name="Scott K.M."/>
            <person name="Klotz M.G."/>
            <person name="Chain P.S.G."/>
            <person name="Hauser L.J."/>
            <person name="Hemp J."/>
            <person name="Huegler M."/>
            <person name="Land M."/>
            <person name="Lapidus A."/>
            <person name="Larimer F.W."/>
            <person name="Lucas S."/>
            <person name="Malfatti S.A."/>
            <person name="Meyer F."/>
            <person name="Paulsen I.T."/>
            <person name="Ren Q."/>
            <person name="Simon J."/>
            <person name="Bailey K."/>
            <person name="Diaz E."/>
            <person name="Fitzpatrick K.A."/>
            <person name="Glover B."/>
            <person name="Gwatney N."/>
            <person name="Korajkic A."/>
            <person name="Long A."/>
            <person name="Mobberley J.M."/>
            <person name="Pantry S.N."/>
            <person name="Pazder G."/>
            <person name="Peterson S."/>
            <person name="Quintanilla J.D."/>
            <person name="Sprinkle R."/>
            <person name="Stephens J."/>
            <person name="Thomas P."/>
            <person name="Vaughn R."/>
            <person name="Weber M.J."/>
            <person name="Wooten L.L."/>
        </authorList>
    </citation>
    <scope>NUCLEOTIDE SEQUENCE [LARGE SCALE GENOMIC DNA]</scope>
    <source>
        <strain>ATCC 33889 / DSM 1251</strain>
    </source>
</reference>
<name>DNAA_SULDN</name>
<proteinExistence type="inferred from homology"/>
<dbReference type="EMBL" id="CP000153">
    <property type="protein sequence ID" value="ABB43282.1"/>
    <property type="molecule type" value="Genomic_DNA"/>
</dbReference>
<dbReference type="RefSeq" id="WP_011371637.1">
    <property type="nucleotide sequence ID" value="NC_007575.1"/>
</dbReference>
<dbReference type="SMR" id="Q30UP9"/>
<dbReference type="STRING" id="326298.Suden_0001"/>
<dbReference type="KEGG" id="tdn:Suden_0001"/>
<dbReference type="eggNOG" id="COG0593">
    <property type="taxonomic scope" value="Bacteria"/>
</dbReference>
<dbReference type="HOGENOM" id="CLU_026910_3_1_7"/>
<dbReference type="OrthoDB" id="9807019at2"/>
<dbReference type="Proteomes" id="UP000002714">
    <property type="component" value="Chromosome"/>
</dbReference>
<dbReference type="GO" id="GO:0005737">
    <property type="term" value="C:cytoplasm"/>
    <property type="evidence" value="ECO:0007669"/>
    <property type="project" value="UniProtKB-SubCell"/>
</dbReference>
<dbReference type="GO" id="GO:0005886">
    <property type="term" value="C:plasma membrane"/>
    <property type="evidence" value="ECO:0007669"/>
    <property type="project" value="TreeGrafter"/>
</dbReference>
<dbReference type="GO" id="GO:0005524">
    <property type="term" value="F:ATP binding"/>
    <property type="evidence" value="ECO:0007669"/>
    <property type="project" value="UniProtKB-UniRule"/>
</dbReference>
<dbReference type="GO" id="GO:0016887">
    <property type="term" value="F:ATP hydrolysis activity"/>
    <property type="evidence" value="ECO:0007669"/>
    <property type="project" value="InterPro"/>
</dbReference>
<dbReference type="GO" id="GO:0003688">
    <property type="term" value="F:DNA replication origin binding"/>
    <property type="evidence" value="ECO:0007669"/>
    <property type="project" value="UniProtKB-UniRule"/>
</dbReference>
<dbReference type="GO" id="GO:0008289">
    <property type="term" value="F:lipid binding"/>
    <property type="evidence" value="ECO:0007669"/>
    <property type="project" value="UniProtKB-KW"/>
</dbReference>
<dbReference type="GO" id="GO:0006270">
    <property type="term" value="P:DNA replication initiation"/>
    <property type="evidence" value="ECO:0007669"/>
    <property type="project" value="UniProtKB-UniRule"/>
</dbReference>
<dbReference type="GO" id="GO:0006275">
    <property type="term" value="P:regulation of DNA replication"/>
    <property type="evidence" value="ECO:0007669"/>
    <property type="project" value="UniProtKB-UniRule"/>
</dbReference>
<dbReference type="CDD" id="cd00009">
    <property type="entry name" value="AAA"/>
    <property type="match status" value="1"/>
</dbReference>
<dbReference type="CDD" id="cd06571">
    <property type="entry name" value="Bac_DnaA_C"/>
    <property type="match status" value="1"/>
</dbReference>
<dbReference type="FunFam" id="3.40.50.300:FF:000668">
    <property type="entry name" value="Chromosomal replication initiator protein DnaA"/>
    <property type="match status" value="1"/>
</dbReference>
<dbReference type="Gene3D" id="1.10.1750.10">
    <property type="match status" value="1"/>
</dbReference>
<dbReference type="Gene3D" id="1.10.8.60">
    <property type="match status" value="1"/>
</dbReference>
<dbReference type="Gene3D" id="3.30.300.180">
    <property type="match status" value="1"/>
</dbReference>
<dbReference type="Gene3D" id="3.40.50.300">
    <property type="entry name" value="P-loop containing nucleotide triphosphate hydrolases"/>
    <property type="match status" value="1"/>
</dbReference>
<dbReference type="HAMAP" id="MF_00377">
    <property type="entry name" value="DnaA_bact"/>
    <property type="match status" value="1"/>
</dbReference>
<dbReference type="InterPro" id="IPR003593">
    <property type="entry name" value="AAA+_ATPase"/>
</dbReference>
<dbReference type="InterPro" id="IPR001957">
    <property type="entry name" value="Chromosome_initiator_DnaA"/>
</dbReference>
<dbReference type="InterPro" id="IPR020591">
    <property type="entry name" value="Chromosome_initiator_DnaA-like"/>
</dbReference>
<dbReference type="InterPro" id="IPR013159">
    <property type="entry name" value="DnaA_C"/>
</dbReference>
<dbReference type="InterPro" id="IPR013317">
    <property type="entry name" value="DnaA_dom"/>
</dbReference>
<dbReference type="InterPro" id="IPR024633">
    <property type="entry name" value="DnaA_N_dom"/>
</dbReference>
<dbReference type="InterPro" id="IPR038454">
    <property type="entry name" value="DnaA_N_sf"/>
</dbReference>
<dbReference type="InterPro" id="IPR027417">
    <property type="entry name" value="P-loop_NTPase"/>
</dbReference>
<dbReference type="InterPro" id="IPR010921">
    <property type="entry name" value="Trp_repressor/repl_initiator"/>
</dbReference>
<dbReference type="NCBIfam" id="TIGR00362">
    <property type="entry name" value="DnaA"/>
    <property type="match status" value="1"/>
</dbReference>
<dbReference type="PANTHER" id="PTHR30050">
    <property type="entry name" value="CHROMOSOMAL REPLICATION INITIATOR PROTEIN DNAA"/>
    <property type="match status" value="1"/>
</dbReference>
<dbReference type="PANTHER" id="PTHR30050:SF2">
    <property type="entry name" value="CHROMOSOMAL REPLICATION INITIATOR PROTEIN DNAA"/>
    <property type="match status" value="1"/>
</dbReference>
<dbReference type="Pfam" id="PF00308">
    <property type="entry name" value="Bac_DnaA"/>
    <property type="match status" value="1"/>
</dbReference>
<dbReference type="Pfam" id="PF08299">
    <property type="entry name" value="Bac_DnaA_C"/>
    <property type="match status" value="1"/>
</dbReference>
<dbReference type="Pfam" id="PF11638">
    <property type="entry name" value="DnaA_N"/>
    <property type="match status" value="1"/>
</dbReference>
<dbReference type="PRINTS" id="PR00051">
    <property type="entry name" value="DNAA"/>
</dbReference>
<dbReference type="SMART" id="SM00382">
    <property type="entry name" value="AAA"/>
    <property type="match status" value="1"/>
</dbReference>
<dbReference type="SMART" id="SM00760">
    <property type="entry name" value="Bac_DnaA_C"/>
    <property type="match status" value="1"/>
</dbReference>
<dbReference type="SUPFAM" id="SSF52540">
    <property type="entry name" value="P-loop containing nucleoside triphosphate hydrolases"/>
    <property type="match status" value="1"/>
</dbReference>
<dbReference type="SUPFAM" id="SSF48295">
    <property type="entry name" value="TrpR-like"/>
    <property type="match status" value="1"/>
</dbReference>
<feature type="chain" id="PRO_1000189816" description="Chromosomal replication initiator protein DnaA">
    <location>
        <begin position="1"/>
        <end position="435"/>
    </location>
</feature>
<feature type="region of interest" description="Domain I, interacts with DnaA modulators" evidence="1">
    <location>
        <begin position="1"/>
        <end position="70"/>
    </location>
</feature>
<feature type="region of interest" description="Domain II" evidence="1">
    <location>
        <begin position="70"/>
        <end position="98"/>
    </location>
</feature>
<feature type="region of interest" description="Domain III, AAA+ region" evidence="1">
    <location>
        <begin position="99"/>
        <end position="313"/>
    </location>
</feature>
<feature type="region of interest" description="Domain IV, binds dsDNA" evidence="1">
    <location>
        <begin position="314"/>
        <end position="435"/>
    </location>
</feature>
<feature type="binding site" evidence="1">
    <location>
        <position position="143"/>
    </location>
    <ligand>
        <name>ATP</name>
        <dbReference type="ChEBI" id="CHEBI:30616"/>
    </ligand>
</feature>
<feature type="binding site" evidence="1">
    <location>
        <position position="145"/>
    </location>
    <ligand>
        <name>ATP</name>
        <dbReference type="ChEBI" id="CHEBI:30616"/>
    </ligand>
</feature>
<feature type="binding site" evidence="1">
    <location>
        <position position="146"/>
    </location>
    <ligand>
        <name>ATP</name>
        <dbReference type="ChEBI" id="CHEBI:30616"/>
    </ligand>
</feature>
<feature type="binding site" evidence="1">
    <location>
        <position position="147"/>
    </location>
    <ligand>
        <name>ATP</name>
        <dbReference type="ChEBI" id="CHEBI:30616"/>
    </ligand>
</feature>
<protein>
    <recommendedName>
        <fullName evidence="1">Chromosomal replication initiator protein DnaA</fullName>
    </recommendedName>
</protein>
<comment type="function">
    <text evidence="1">Plays an essential role in the initiation and regulation of chromosomal replication. ATP-DnaA binds to the origin of replication (oriC) to initiate formation of the DNA replication initiation complex once per cell cycle. Binds the DnaA box (a 9 base pair repeat at the origin) and separates the double-stranded (ds)DNA. Forms a right-handed helical filament on oriC DNA; dsDNA binds to the exterior of the filament while single-stranded (ss)DNA is stabiized in the filament's interior. The ATP-DnaA-oriC complex binds and stabilizes one strand of the AT-rich DNA unwinding element (DUE), permitting loading of DNA polymerase. After initiation quickly degrades to an ADP-DnaA complex that is not apt for DNA replication. Binds acidic phospholipids.</text>
</comment>
<comment type="subunit">
    <text evidence="1">Oligomerizes as a right-handed, spiral filament on DNA at oriC.</text>
</comment>
<comment type="subcellular location">
    <subcellularLocation>
        <location evidence="1">Cytoplasm</location>
    </subcellularLocation>
</comment>
<comment type="domain">
    <text evidence="1">Domain I is involved in oligomerization and binding regulators, domain II is flexibile and of varying length in different bacteria, domain III forms the AAA+ region, while domain IV binds dsDNA.</text>
</comment>
<comment type="similarity">
    <text evidence="1">Belongs to the DnaA family.</text>
</comment>
<sequence length="435" mass="49941">MNIGEKILLLLKEEIPEIEYNRYIKHLTYDTKKSTADNAIFYVPNSLVLSWIKNRYSSKIKHLFEIQNSIKVDVSILLKNQVESKKAEQKSVQKQQHSLLNPSHTFENFMVGGSNQFAYAAVKSVSEKAGVLYNPLFIHGGVGLGKTHLMQAAGNVFQNQGKVVIYTTVEQFLNDFIRHVRNKTMERFQEKYRKCDVLLIDDIQFLSNKEGIQEEFFHTFEALKGVGKQIILTADKHPKKIAGLEKRLQSRFEHGLVADIQPPELETKIAIIENKCKINKVILTKDIIHYIATVIESNVREIEGILSKLHAYSQLMHVDIDLQFTKNVLKDQLQENRANLTLDIITQNVAKDLNIKPSEIRSKGRSKNLVYARRIAIYLCRELTQNTMPQLAQYFGMQDHTAISHTLKKIGELMQNDEDFKVKIEELTNKITSSS</sequence>
<keyword id="KW-0067">ATP-binding</keyword>
<keyword id="KW-0963">Cytoplasm</keyword>
<keyword id="KW-0235">DNA replication</keyword>
<keyword id="KW-0238">DNA-binding</keyword>
<keyword id="KW-0446">Lipid-binding</keyword>
<keyword id="KW-0547">Nucleotide-binding</keyword>
<keyword id="KW-1185">Reference proteome</keyword>